<evidence type="ECO:0000255" key="1">
    <source>
        <dbReference type="PROSITE-ProRule" id="PRU01128"/>
    </source>
</evidence>
<evidence type="ECO:0000305" key="2"/>
<reference key="1">
    <citation type="submission" date="1999-09" db="EMBL/GenBank/DDBJ databases">
        <title>DGL-1: a novel candidate gene for the CATCH 22 microdeletion syndromes.</title>
        <authorList>
            <person name="Farlie P.G."/>
            <person name="Reid C.J."/>
            <person name="Wilcox S."/>
            <person name="Newgreen D.F."/>
        </authorList>
    </citation>
    <scope>NUCLEOTIDE SEQUENCE [MRNA]</scope>
</reference>
<comment type="similarity">
    <text evidence="2">Belongs to the yippee family.</text>
</comment>
<proteinExistence type="inferred from homology"/>
<dbReference type="EMBL" id="AF190625">
    <property type="protein sequence ID" value="AAG17144.1"/>
    <property type="molecule type" value="mRNA"/>
</dbReference>
<dbReference type="SMR" id="Q9DG42"/>
<dbReference type="Proteomes" id="UP000694412">
    <property type="component" value="Unplaced"/>
</dbReference>
<dbReference type="GO" id="GO:0046872">
    <property type="term" value="F:metal ion binding"/>
    <property type="evidence" value="ECO:0007669"/>
    <property type="project" value="UniProtKB-KW"/>
</dbReference>
<dbReference type="InterPro" id="IPR034751">
    <property type="entry name" value="Yippee"/>
</dbReference>
<dbReference type="InterPro" id="IPR004910">
    <property type="entry name" value="Yippee/Mis18/Cereblon"/>
</dbReference>
<dbReference type="InterPro" id="IPR039058">
    <property type="entry name" value="Yippee_fam"/>
</dbReference>
<dbReference type="PANTHER" id="PTHR13848">
    <property type="entry name" value="PROTEIN YIPPEE-LIKE CG15309-RELATED"/>
    <property type="match status" value="1"/>
</dbReference>
<dbReference type="Pfam" id="PF03226">
    <property type="entry name" value="Yippee-Mis18"/>
    <property type="match status" value="1"/>
</dbReference>
<dbReference type="PROSITE" id="PS51792">
    <property type="entry name" value="YIPPEE"/>
    <property type="match status" value="1"/>
</dbReference>
<keyword id="KW-0479">Metal-binding</keyword>
<keyword id="KW-1185">Reference proteome</keyword>
<keyword id="KW-0862">Zinc</keyword>
<accession>Q9DG42</accession>
<organism>
    <name type="scientific">Coturnix japonica</name>
    <name type="common">Japanese quail</name>
    <name type="synonym">Coturnix coturnix japonica</name>
    <dbReference type="NCBI Taxonomy" id="93934"/>
    <lineage>
        <taxon>Eukaryota</taxon>
        <taxon>Metazoa</taxon>
        <taxon>Chordata</taxon>
        <taxon>Craniata</taxon>
        <taxon>Vertebrata</taxon>
        <taxon>Euteleostomi</taxon>
        <taxon>Archelosauria</taxon>
        <taxon>Archosauria</taxon>
        <taxon>Dinosauria</taxon>
        <taxon>Saurischia</taxon>
        <taxon>Theropoda</taxon>
        <taxon>Coelurosauria</taxon>
        <taxon>Aves</taxon>
        <taxon>Neognathae</taxon>
        <taxon>Galloanserae</taxon>
        <taxon>Galliformes</taxon>
        <taxon>Phasianidae</taxon>
        <taxon>Perdicinae</taxon>
        <taxon>Coturnix</taxon>
    </lineage>
</organism>
<gene>
    <name type="primary">YPEL1</name>
</gene>
<sequence length="119" mass="13575">MVKMTKSKTFQAYLPNCHRTYSCIHCRAHLANHDELISKSFQGSQGRAYLFNSVVNVGCGPAEERVLLTGLHAVADIYCENCKTTLGWKYEHAFESSQKYKEGKFIIELAHMIKDNGWE</sequence>
<protein>
    <recommendedName>
        <fullName>Protein yippee-like 1</fullName>
    </recommendedName>
    <alternativeName>
        <fullName>DGL-1</fullName>
    </alternativeName>
    <alternativeName>
        <fullName>Qdgl-1</fullName>
    </alternativeName>
</protein>
<feature type="chain" id="PRO_0000212383" description="Protein yippee-like 1">
    <location>
        <begin position="1"/>
        <end position="119"/>
    </location>
</feature>
<feature type="domain" description="Yippee" evidence="1">
    <location>
        <begin position="19"/>
        <end position="116"/>
    </location>
</feature>
<feature type="binding site" evidence="1">
    <location>
        <position position="23"/>
    </location>
    <ligand>
        <name>Zn(2+)</name>
        <dbReference type="ChEBI" id="CHEBI:29105"/>
    </ligand>
</feature>
<feature type="binding site" evidence="1">
    <location>
        <position position="26"/>
    </location>
    <ligand>
        <name>Zn(2+)</name>
        <dbReference type="ChEBI" id="CHEBI:29105"/>
    </ligand>
</feature>
<feature type="binding site" evidence="1">
    <location>
        <position position="79"/>
    </location>
    <ligand>
        <name>Zn(2+)</name>
        <dbReference type="ChEBI" id="CHEBI:29105"/>
    </ligand>
</feature>
<feature type="binding site" evidence="1">
    <location>
        <position position="82"/>
    </location>
    <ligand>
        <name>Zn(2+)</name>
        <dbReference type="ChEBI" id="CHEBI:29105"/>
    </ligand>
</feature>
<name>YPEL1_COTJA</name>